<comment type="function">
    <text evidence="3 4">Neuronal cell surface protein that may be involved in cell recognition and cell adhesion. May mediate intracellular signaling (By similarity). Functions as part of a trans-synaptic complex by binding to cerebellins and postsynaptic GRID1. This interaction helps regulate the activity of NMDA and AMPA receptors at hippocampal synapses without affecting synapse formation. NRXN3B-CBLN2-GRID1 complex transduce presynaptic signals into postsynaptic AMPAR response (By similarity).</text>
</comment>
<comment type="subunit">
    <text evidence="2 3">Weakly interacts with CBLN1 and CBLN2 (By similarity). Very weak binding, if any, to CBLN4 (By similarity). Specific isoforms bind neuroligins NLGN1, NLGN2 and NLGN3 (By similarity). Interacts with CLSTN3 (By similarity).</text>
</comment>
<comment type="interaction">
    <interactant intactId="EBI-18040962">
        <id>Q9HDB5-2</id>
    </interactant>
    <interactant intactId="EBI-10240813">
        <id>Q3KNR5</id>
        <label>PAX4</label>
    </interactant>
    <organismsDiffer>false</organismsDiffer>
    <experiments>3</experiments>
</comment>
<comment type="subcellular location">
    <subcellularLocation>
        <location evidence="3">Presynaptic cell membrane</location>
        <topology evidence="5">Single-pass type I membrane protein</topology>
    </subcellularLocation>
</comment>
<comment type="alternative products">
    <event type="alternative promoter"/>
    <event type="alternative splicing"/>
    <isoform>
        <id>Q9HDB5-1</id>
        <name>1b</name>
        <sequence type="displayed"/>
    </isoform>
    <isoform>
        <id>Q9HDB5-2</id>
        <name>2b</name>
        <sequence type="described" ref="VSP_036465 VSP_036466"/>
    </isoform>
    <isoform>
        <id>Q9HDB5-3</id>
        <name>3b</name>
        <sequence type="described" ref="VSP_035644 VSP_035646 VSP_035647"/>
    </isoform>
    <isoform>
        <id>Q9HDB5-4</id>
        <name>4b</name>
        <sequence type="described" ref="VSP_035644 VSP_040988"/>
    </isoform>
    <isoform>
        <id>Q9Y4C0-1</id>
        <name>1a</name>
        <sequence type="external"/>
    </isoform>
    <isoform>
        <id>Q9Y4C0-3</id>
        <name>3a</name>
        <sequence type="external"/>
    </isoform>
    <isoform>
        <id>Q9Y4C0-4</id>
        <name>4a</name>
        <sequence type="external"/>
    </isoform>
    <text>A number of isoforms, alpha-type and beta-type, are produced by alternative promoter usage. Beta-type isoforms differ from alpha-type isoforms in their N-terminus. Additional isoforms produced by alternative splicing seem to exist.</text>
</comment>
<comment type="tissue specificity">
    <text evidence="8">Expressed in the blood vessel walls (at protein level).</text>
</comment>
<comment type="PTM">
    <text evidence="9">Processed by alpha-secretase leading to the formation of an extracellular soluble protein as well as a C-terminal membrane-embedded fragment (CTF). Proteolysis of these CTFs by gamma-secretase releases intracellular domains (ICDs) and extracellular peptides.</text>
</comment>
<comment type="PTM">
    <text evidence="3">O-glycosylated; contains heparan sulfate. Heparan sulfate attachment is required for synapse development by mediating interactions with neuroligins.</text>
</comment>
<comment type="miscellaneous">
    <molecule>Isoform 2b</molecule>
    <text evidence="13">Produced by alternative splicing.</text>
</comment>
<comment type="miscellaneous">
    <molecule>Isoform 3b</molecule>
    <text evidence="13">Produced by alternative splicing.</text>
</comment>
<comment type="miscellaneous">
    <molecule>Isoform 4b</molecule>
    <text evidence="13">Produced by alternative splicing.</text>
</comment>
<comment type="similarity">
    <text evidence="13">Belongs to the neurexin family.</text>
</comment>
<protein>
    <recommendedName>
        <fullName>Neurexin-3-beta</fullName>
    </recommendedName>
    <alternativeName>
        <fullName>Neurexin III-beta</fullName>
    </alternativeName>
    <component>
        <recommendedName>
            <fullName evidence="14">Neurexin-3-beta, soluble form</fullName>
        </recommendedName>
    </component>
    <component>
        <recommendedName>
            <fullName>Neurexin-3-beta, C-terminal fragment</fullName>
            <shortName>NRXN3-CTF</shortName>
        </recommendedName>
    </component>
</protein>
<reference key="1">
    <citation type="journal article" date="2002" name="Biochem. Biophys. Res. Commun.">
        <title>Identification and characterization of heart-specific splicing of human neurexin 3 mRNA (NRXN3).</title>
        <authorList>
            <person name="Occhi G."/>
            <person name="Rampazzo A."/>
            <person name="Beffagna G."/>
            <person name="Antonio Danieli G."/>
        </authorList>
    </citation>
    <scope>NUCLEOTIDE SEQUENCE [MRNA] (ISOFORM 3B)</scope>
    <source>
        <tissue>Heart</tissue>
    </source>
</reference>
<reference key="2">
    <citation type="journal article" date="2002" name="Genomics">
        <title>Analysis of the human neurexin genes: alternative splicing and the generation of protein diversity.</title>
        <authorList>
            <person name="Rowen L."/>
            <person name="Young J."/>
            <person name="Birditt B."/>
            <person name="Kaur A."/>
            <person name="Madan A."/>
            <person name="Philipps D.L."/>
            <person name="Qin S."/>
            <person name="Minx P."/>
            <person name="Wilson R.K."/>
            <person name="Hood L."/>
            <person name="Graveley B.R."/>
        </authorList>
    </citation>
    <scope>NUCLEOTIDE SEQUENCE [GENOMIC DNA]</scope>
    <scope>ALTERNATIVE SPLICING</scope>
</reference>
<reference key="3">
    <citation type="journal article" date="2004" name="Nat. Genet.">
        <title>Complete sequencing and characterization of 21,243 full-length human cDNAs.</title>
        <authorList>
            <person name="Ota T."/>
            <person name="Suzuki Y."/>
            <person name="Nishikawa T."/>
            <person name="Otsuki T."/>
            <person name="Sugiyama T."/>
            <person name="Irie R."/>
            <person name="Wakamatsu A."/>
            <person name="Hayashi K."/>
            <person name="Sato H."/>
            <person name="Nagai K."/>
            <person name="Kimura K."/>
            <person name="Makita H."/>
            <person name="Sekine M."/>
            <person name="Obayashi M."/>
            <person name="Nishi T."/>
            <person name="Shibahara T."/>
            <person name="Tanaka T."/>
            <person name="Ishii S."/>
            <person name="Yamamoto J."/>
            <person name="Saito K."/>
            <person name="Kawai Y."/>
            <person name="Isono Y."/>
            <person name="Nakamura Y."/>
            <person name="Nagahari K."/>
            <person name="Murakami K."/>
            <person name="Yasuda T."/>
            <person name="Iwayanagi T."/>
            <person name="Wagatsuma M."/>
            <person name="Shiratori A."/>
            <person name="Sudo H."/>
            <person name="Hosoiri T."/>
            <person name="Kaku Y."/>
            <person name="Kodaira H."/>
            <person name="Kondo H."/>
            <person name="Sugawara M."/>
            <person name="Takahashi M."/>
            <person name="Kanda K."/>
            <person name="Yokoi T."/>
            <person name="Furuya T."/>
            <person name="Kikkawa E."/>
            <person name="Omura Y."/>
            <person name="Abe K."/>
            <person name="Kamihara K."/>
            <person name="Katsuta N."/>
            <person name="Sato K."/>
            <person name="Tanikawa M."/>
            <person name="Yamazaki M."/>
            <person name="Ninomiya K."/>
            <person name="Ishibashi T."/>
            <person name="Yamashita H."/>
            <person name="Murakawa K."/>
            <person name="Fujimori K."/>
            <person name="Tanai H."/>
            <person name="Kimata M."/>
            <person name="Watanabe M."/>
            <person name="Hiraoka S."/>
            <person name="Chiba Y."/>
            <person name="Ishida S."/>
            <person name="Ono Y."/>
            <person name="Takiguchi S."/>
            <person name="Watanabe S."/>
            <person name="Yosida M."/>
            <person name="Hotuta T."/>
            <person name="Kusano J."/>
            <person name="Kanehori K."/>
            <person name="Takahashi-Fujii A."/>
            <person name="Hara H."/>
            <person name="Tanase T.-O."/>
            <person name="Nomura Y."/>
            <person name="Togiya S."/>
            <person name="Komai F."/>
            <person name="Hara R."/>
            <person name="Takeuchi K."/>
            <person name="Arita M."/>
            <person name="Imose N."/>
            <person name="Musashino K."/>
            <person name="Yuuki H."/>
            <person name="Oshima A."/>
            <person name="Sasaki N."/>
            <person name="Aotsuka S."/>
            <person name="Yoshikawa Y."/>
            <person name="Matsunawa H."/>
            <person name="Ichihara T."/>
            <person name="Shiohata N."/>
            <person name="Sano S."/>
            <person name="Moriya S."/>
            <person name="Momiyama H."/>
            <person name="Satoh N."/>
            <person name="Takami S."/>
            <person name="Terashima Y."/>
            <person name="Suzuki O."/>
            <person name="Nakagawa S."/>
            <person name="Senoh A."/>
            <person name="Mizoguchi H."/>
            <person name="Goto Y."/>
            <person name="Shimizu F."/>
            <person name="Wakebe H."/>
            <person name="Hishigaki H."/>
            <person name="Watanabe T."/>
            <person name="Sugiyama A."/>
            <person name="Takemoto M."/>
            <person name="Kawakami B."/>
            <person name="Yamazaki M."/>
            <person name="Watanabe K."/>
            <person name="Kumagai A."/>
            <person name="Itakura S."/>
            <person name="Fukuzumi Y."/>
            <person name="Fujimori Y."/>
            <person name="Komiyama M."/>
            <person name="Tashiro H."/>
            <person name="Tanigami A."/>
            <person name="Fujiwara T."/>
            <person name="Ono T."/>
            <person name="Yamada K."/>
            <person name="Fujii Y."/>
            <person name="Ozaki K."/>
            <person name="Hirao M."/>
            <person name="Ohmori Y."/>
            <person name="Kawabata A."/>
            <person name="Hikiji T."/>
            <person name="Kobatake N."/>
            <person name="Inagaki H."/>
            <person name="Ikema Y."/>
            <person name="Okamoto S."/>
            <person name="Okitani R."/>
            <person name="Kawakami T."/>
            <person name="Noguchi S."/>
            <person name="Itoh T."/>
            <person name="Shigeta K."/>
            <person name="Senba T."/>
            <person name="Matsumura K."/>
            <person name="Nakajima Y."/>
            <person name="Mizuno T."/>
            <person name="Morinaga M."/>
            <person name="Sasaki M."/>
            <person name="Togashi T."/>
            <person name="Oyama M."/>
            <person name="Hata H."/>
            <person name="Watanabe M."/>
            <person name="Komatsu T."/>
            <person name="Mizushima-Sugano J."/>
            <person name="Satoh T."/>
            <person name="Shirai Y."/>
            <person name="Takahashi Y."/>
            <person name="Nakagawa K."/>
            <person name="Okumura K."/>
            <person name="Nagase T."/>
            <person name="Nomura N."/>
            <person name="Kikuchi H."/>
            <person name="Masuho Y."/>
            <person name="Yamashita R."/>
            <person name="Nakai K."/>
            <person name="Yada T."/>
            <person name="Nakamura Y."/>
            <person name="Ohara O."/>
            <person name="Isogai T."/>
            <person name="Sugano S."/>
        </authorList>
    </citation>
    <scope>NUCLEOTIDE SEQUENCE [LARGE SCALE MRNA] (ISOFORM 1B)</scope>
    <source>
        <tissue>Teratocarcinoma</tissue>
    </source>
</reference>
<reference key="4">
    <citation type="journal article" date="2007" name="BMC Genomics">
        <title>The full-ORF clone resource of the German cDNA consortium.</title>
        <authorList>
            <person name="Bechtel S."/>
            <person name="Rosenfelder H."/>
            <person name="Duda A."/>
            <person name="Schmidt C.P."/>
            <person name="Ernst U."/>
            <person name="Wellenreuther R."/>
            <person name="Mehrle A."/>
            <person name="Schuster C."/>
            <person name="Bahr A."/>
            <person name="Bloecker H."/>
            <person name="Heubner D."/>
            <person name="Hoerlein A."/>
            <person name="Michel G."/>
            <person name="Wedler H."/>
            <person name="Koehrer K."/>
            <person name="Ottenwaelder B."/>
            <person name="Poustka A."/>
            <person name="Wiemann S."/>
            <person name="Schupp I."/>
        </authorList>
    </citation>
    <scope>NUCLEOTIDE SEQUENCE [LARGE SCALE MRNA] (ISOFORM 2B)</scope>
    <source>
        <tissue>Stomach</tissue>
    </source>
</reference>
<reference key="5">
    <citation type="journal article" date="2003" name="Nature">
        <title>The DNA sequence and analysis of human chromosome 14.</title>
        <authorList>
            <person name="Heilig R."/>
            <person name="Eckenberg R."/>
            <person name="Petit J.-L."/>
            <person name="Fonknechten N."/>
            <person name="Da Silva C."/>
            <person name="Cattolico L."/>
            <person name="Levy M."/>
            <person name="Barbe V."/>
            <person name="De Berardinis V."/>
            <person name="Ureta-Vidal A."/>
            <person name="Pelletier E."/>
            <person name="Vico V."/>
            <person name="Anthouard V."/>
            <person name="Rowen L."/>
            <person name="Madan A."/>
            <person name="Qin S."/>
            <person name="Sun H."/>
            <person name="Du H."/>
            <person name="Pepin K."/>
            <person name="Artiguenave F."/>
            <person name="Robert C."/>
            <person name="Cruaud C."/>
            <person name="Bruels T."/>
            <person name="Jaillon O."/>
            <person name="Friedlander L."/>
            <person name="Samson G."/>
            <person name="Brottier P."/>
            <person name="Cure S."/>
            <person name="Segurens B."/>
            <person name="Aniere F."/>
            <person name="Samain S."/>
            <person name="Crespeau H."/>
            <person name="Abbasi N."/>
            <person name="Aiach N."/>
            <person name="Boscus D."/>
            <person name="Dickhoff R."/>
            <person name="Dors M."/>
            <person name="Dubois I."/>
            <person name="Friedman C."/>
            <person name="Gouyvenoux M."/>
            <person name="James R."/>
            <person name="Madan A."/>
            <person name="Mairey-Estrada B."/>
            <person name="Mangenot S."/>
            <person name="Martins N."/>
            <person name="Menard M."/>
            <person name="Oztas S."/>
            <person name="Ratcliffe A."/>
            <person name="Shaffer T."/>
            <person name="Trask B."/>
            <person name="Vacherie B."/>
            <person name="Bellemere C."/>
            <person name="Belser C."/>
            <person name="Besnard-Gonnet M."/>
            <person name="Bartol-Mavel D."/>
            <person name="Boutard M."/>
            <person name="Briez-Silla S."/>
            <person name="Combette S."/>
            <person name="Dufosse-Laurent V."/>
            <person name="Ferron C."/>
            <person name="Lechaplais C."/>
            <person name="Louesse C."/>
            <person name="Muselet D."/>
            <person name="Magdelenat G."/>
            <person name="Pateau E."/>
            <person name="Petit E."/>
            <person name="Sirvain-Trukniewicz P."/>
            <person name="Trybou A."/>
            <person name="Vega-Czarny N."/>
            <person name="Bataille E."/>
            <person name="Bluet E."/>
            <person name="Bordelais I."/>
            <person name="Dubois M."/>
            <person name="Dumont C."/>
            <person name="Guerin T."/>
            <person name="Haffray S."/>
            <person name="Hammadi R."/>
            <person name="Muanga J."/>
            <person name="Pellouin V."/>
            <person name="Robert D."/>
            <person name="Wunderle E."/>
            <person name="Gauguet G."/>
            <person name="Roy A."/>
            <person name="Sainte-Marthe L."/>
            <person name="Verdier J."/>
            <person name="Verdier-Discala C."/>
            <person name="Hillier L.W."/>
            <person name="Fulton L."/>
            <person name="McPherson J."/>
            <person name="Matsuda F."/>
            <person name="Wilson R."/>
            <person name="Scarpelli C."/>
            <person name="Gyapay G."/>
            <person name="Wincker P."/>
            <person name="Saurin W."/>
            <person name="Quetier F."/>
            <person name="Waterston R."/>
            <person name="Hood L."/>
            <person name="Weissenbach J."/>
        </authorList>
    </citation>
    <scope>NUCLEOTIDE SEQUENCE [LARGE SCALE GENOMIC DNA]</scope>
</reference>
<reference key="6">
    <citation type="submission" date="2005-07" db="EMBL/GenBank/DDBJ databases">
        <authorList>
            <person name="Mural R.J."/>
            <person name="Istrail S."/>
            <person name="Sutton G.G."/>
            <person name="Florea L."/>
            <person name="Halpern A.L."/>
            <person name="Mobarry C.M."/>
            <person name="Lippert R."/>
            <person name="Walenz B."/>
            <person name="Shatkay H."/>
            <person name="Dew I."/>
            <person name="Miller J.R."/>
            <person name="Flanigan M.J."/>
            <person name="Edwards N.J."/>
            <person name="Bolanos R."/>
            <person name="Fasulo D."/>
            <person name="Halldorsson B.V."/>
            <person name="Hannenhalli S."/>
            <person name="Turner R."/>
            <person name="Yooseph S."/>
            <person name="Lu F."/>
            <person name="Nusskern D.R."/>
            <person name="Shue B.C."/>
            <person name="Zheng X.H."/>
            <person name="Zhong F."/>
            <person name="Delcher A.L."/>
            <person name="Huson D.H."/>
            <person name="Kravitz S.A."/>
            <person name="Mouchard L."/>
            <person name="Reinert K."/>
            <person name="Remington K.A."/>
            <person name="Clark A.G."/>
            <person name="Waterman M.S."/>
            <person name="Eichler E.E."/>
            <person name="Adams M.D."/>
            <person name="Hunkapiller M.W."/>
            <person name="Myers E.W."/>
            <person name="Venter J.C."/>
        </authorList>
    </citation>
    <scope>NUCLEOTIDE SEQUENCE [LARGE SCALE GENOMIC DNA]</scope>
</reference>
<reference key="7">
    <citation type="journal article" date="2004" name="Genome Res.">
        <title>The status, quality, and expansion of the NIH full-length cDNA project: the Mammalian Gene Collection (MGC).</title>
        <authorList>
            <consortium name="The MGC Project Team"/>
        </authorList>
    </citation>
    <scope>NUCLEOTIDE SEQUENCE [LARGE SCALE MRNA] (ISOFORM 2B)</scope>
    <source>
        <tissue>Placenta</tissue>
    </source>
</reference>
<reference key="8">
    <citation type="journal article" date="2009" name="Proc. Natl. Acad. Sci. U.S.A.">
        <title>The synaptic proteins neurexins and neuroligins are widely expressed in the vascular system and contribute to its functions.</title>
        <authorList>
            <person name="Bottos A."/>
            <person name="Destro E."/>
            <person name="Rissone A."/>
            <person name="Graziano S."/>
            <person name="Cordara G."/>
            <person name="Assenzio B."/>
            <person name="Cera M.R."/>
            <person name="Mascia L."/>
            <person name="Bussolino F."/>
            <person name="Arese M."/>
        </authorList>
    </citation>
    <scope>TISSUE SPECIFICITY</scope>
</reference>
<reference key="9">
    <citation type="journal article" date="2011" name="J. Biol. Chem.">
        <title>Processing of the synaptic cell adhesion molecule neurexin-3beta by Alzheimer disease alpha- and gamma-secretases.</title>
        <authorList>
            <person name="Bot N."/>
            <person name="Schweizer C."/>
            <person name="Ben Halima S."/>
            <person name="Fraering P.C."/>
        </authorList>
    </citation>
    <scope>PROTEOLYTIC PROCESSING</scope>
</reference>
<proteinExistence type="evidence at protein level"/>
<keyword id="KW-0877">Alternative promoter usage</keyword>
<keyword id="KW-0025">Alternative splicing</keyword>
<keyword id="KW-0037">Angiogenesis</keyword>
<keyword id="KW-0106">Calcium</keyword>
<keyword id="KW-0130">Cell adhesion</keyword>
<keyword id="KW-1003">Cell membrane</keyword>
<keyword id="KW-0966">Cell projection</keyword>
<keyword id="KW-0325">Glycoprotein</keyword>
<keyword id="KW-0357">Heparan sulfate</keyword>
<keyword id="KW-0472">Membrane</keyword>
<keyword id="KW-0479">Metal-binding</keyword>
<keyword id="KW-0654">Proteoglycan</keyword>
<keyword id="KW-1267">Proteomics identification</keyword>
<keyword id="KW-1185">Reference proteome</keyword>
<keyword id="KW-0677">Repeat</keyword>
<keyword id="KW-0732">Signal</keyword>
<keyword id="KW-0770">Synapse</keyword>
<keyword id="KW-0812">Transmembrane</keyword>
<keyword id="KW-1133">Transmembrane helix</keyword>
<organism>
    <name type="scientific">Homo sapiens</name>
    <name type="common">Human</name>
    <dbReference type="NCBI Taxonomy" id="9606"/>
    <lineage>
        <taxon>Eukaryota</taxon>
        <taxon>Metazoa</taxon>
        <taxon>Chordata</taxon>
        <taxon>Craniata</taxon>
        <taxon>Vertebrata</taxon>
        <taxon>Euteleostomi</taxon>
        <taxon>Mammalia</taxon>
        <taxon>Eutheria</taxon>
        <taxon>Euarchontoglires</taxon>
        <taxon>Primates</taxon>
        <taxon>Haplorrhini</taxon>
        <taxon>Catarrhini</taxon>
        <taxon>Hominidae</taxon>
        <taxon>Homo</taxon>
    </lineage>
</organism>
<evidence type="ECO:0000250" key="1">
    <source>
        <dbReference type="UniProtKB" id="Q63373"/>
    </source>
</evidence>
<evidence type="ECO:0000250" key="2">
    <source>
        <dbReference type="UniProtKB" id="Q63376"/>
    </source>
</evidence>
<evidence type="ECO:0000250" key="3">
    <source>
        <dbReference type="UniProtKB" id="Q8C985"/>
    </source>
</evidence>
<evidence type="ECO:0000250" key="4">
    <source>
        <dbReference type="UniProtKB" id="Q9CS84"/>
    </source>
</evidence>
<evidence type="ECO:0000255" key="5"/>
<evidence type="ECO:0000255" key="6">
    <source>
        <dbReference type="PROSITE-ProRule" id="PRU00122"/>
    </source>
</evidence>
<evidence type="ECO:0000256" key="7">
    <source>
        <dbReference type="SAM" id="MobiDB-lite"/>
    </source>
</evidence>
<evidence type="ECO:0000269" key="8">
    <source>
    </source>
</evidence>
<evidence type="ECO:0000269" key="9">
    <source>
    </source>
</evidence>
<evidence type="ECO:0000303" key="10">
    <source>
    </source>
</evidence>
<evidence type="ECO:0000303" key="11">
    <source>
    </source>
</evidence>
<evidence type="ECO:0000303" key="12">
    <source>
    </source>
</evidence>
<evidence type="ECO:0000305" key="13"/>
<evidence type="ECO:0000305" key="14">
    <source>
    </source>
</evidence>
<evidence type="ECO:0000312" key="15">
    <source>
        <dbReference type="HGNC" id="HGNC:8010"/>
    </source>
</evidence>
<gene>
    <name evidence="15" type="primary">NRXN3</name>
    <name type="synonym">KIAA0743</name>
</gene>
<name>NRX3B_HUMAN</name>
<accession>Q9HDB5</accession>
<accession>A5PKW8</accession>
<accession>A8MPU5</accession>
<accession>B3KPM7</accession>
<accession>Q6NUR0</accession>
<accession>Q8IUD8</accession>
<sequence length="637" mass="69305">MHLRIHARRSPPRRPAWTLGIWFLFWGCIVSSVWSSSNVASSSSTSSSPGSHSQHEHHFHGSKHHSVPISIYRSPVSLRGGHAGATYIFGKSGGLILYTWPANDRPSTRSDRLAVGFSTTVKDGILVRIDSAPGLGDFLQLHIEQGKIGVVFNIGTVDISIKEERTPVNDGKYHVVRFTRNGGNATLQVDNWPVNEHYPTGRQLTIFNTQAQIAIGGKDKGRLFQGQLSGLYYDGLKVLNMAAENNPNIKINGSVRLVGEVPSILGTTQTTSMPPEMSTTVMETTTTMATTTTRKNRSTASIQPTSDDLVSSAECSSDDEDFVECEPSTGGELVIPLLVEDPLATPPIATRAPSITLPPTFRPLLTIIETTKDSLSMTSEAGLPCLSDQGSDGCDDDGLVISGYGSGETFDSNLPPTDDEDFYTTFSLVTDKSLSTSIFEGGYKAHAPKWESKDFRPNKVSETSRTTTTSLSPELIRFTASSSSGMVPKLPAGKMNNRDLKPQPDIVLLPLPTAYELDSTKLKSPLITSPMFRNVPTANPTEPGIRRVPGASEVIRESSSTTGMVVGIVAAAALCILILLYAMYKYRNRDEGSYQVDETRNYISNSAQSNGTLMKEKQQSSKSGHKKQKNKDREYYV</sequence>
<dbReference type="EMBL" id="AJ493127">
    <property type="protein sequence ID" value="CAD37989.1"/>
    <property type="molecule type" value="mRNA"/>
</dbReference>
<dbReference type="EMBL" id="AF123462">
    <property type="protein sequence ID" value="AAD13621.1"/>
    <property type="molecule type" value="Genomic_DNA"/>
</dbReference>
<dbReference type="EMBL" id="AK056530">
    <property type="protein sequence ID" value="BAG51739.1"/>
    <property type="molecule type" value="mRNA"/>
</dbReference>
<dbReference type="EMBL" id="AL833739">
    <property type="protein sequence ID" value="CAH56254.1"/>
    <property type="molecule type" value="mRNA"/>
</dbReference>
<dbReference type="EMBL" id="AC008056">
    <property type="protein sequence ID" value="AAF09143.1"/>
    <property type="molecule type" value="Genomic_DNA"/>
</dbReference>
<dbReference type="EMBL" id="AC012099">
    <property type="protein sequence ID" value="AAF15058.1"/>
    <property type="molecule type" value="Genomic_DNA"/>
</dbReference>
<dbReference type="EMBL" id="AC018514">
    <property type="protein sequence ID" value="AAF99808.1"/>
    <property type="molecule type" value="Genomic_DNA"/>
</dbReference>
<dbReference type="EMBL" id="CH471061">
    <property type="protein sequence ID" value="EAW81313.1"/>
    <property type="molecule type" value="Genomic_DNA"/>
</dbReference>
<dbReference type="EMBL" id="CH471061">
    <property type="protein sequence ID" value="EAW81315.1"/>
    <property type="molecule type" value="Genomic_DNA"/>
</dbReference>
<dbReference type="EMBL" id="BC059368">
    <property type="protein sequence ID" value="AAH59368.1"/>
    <property type="molecule type" value="mRNA"/>
</dbReference>
<dbReference type="EMBL" id="BC068469">
    <property type="protein sequence ID" value="AAH68469.1"/>
    <property type="molecule type" value="mRNA"/>
</dbReference>
<dbReference type="EMBL" id="BC142649">
    <property type="protein sequence ID" value="AAI42650.1"/>
    <property type="molecule type" value="mRNA"/>
</dbReference>
<dbReference type="EMBL" id="BC150194">
    <property type="protein sequence ID" value="AAI50195.1"/>
    <property type="molecule type" value="mRNA"/>
</dbReference>
<dbReference type="CCDS" id="CCDS45145.1">
    <molecule id="Q9HDB5-4"/>
</dbReference>
<dbReference type="CCDS" id="CCDS61515.1">
    <molecule id="Q9HDB5-1"/>
</dbReference>
<dbReference type="CCDS" id="CCDS9871.1">
    <molecule id="Q9HDB5-2"/>
</dbReference>
<dbReference type="RefSeq" id="NP_001098720.1">
    <molecule id="Q9HDB5-4"/>
    <property type="nucleotide sequence ID" value="NM_001105250.3"/>
</dbReference>
<dbReference type="RefSeq" id="NP_001258949.1">
    <molecule id="Q9HDB5-1"/>
    <property type="nucleotide sequence ID" value="NM_001272020.2"/>
</dbReference>
<dbReference type="RefSeq" id="NP_004787.2">
    <property type="nucleotide sequence ID" value="NM_004796.5"/>
</dbReference>
<dbReference type="RefSeq" id="NP_620426.2">
    <molecule id="Q9HDB5-2"/>
    <property type="nucleotide sequence ID" value="NM_138970.4"/>
</dbReference>
<dbReference type="SMR" id="Q9HDB5"/>
<dbReference type="BioGRID" id="114770">
    <property type="interactions" value="26"/>
</dbReference>
<dbReference type="IntAct" id="Q9HDB5">
    <property type="interactions" value="14"/>
</dbReference>
<dbReference type="MINT" id="Q9HDB5"/>
<dbReference type="GlyCosmos" id="Q9HDB5">
    <property type="glycosylation" value="3 sites, No reported glycans"/>
</dbReference>
<dbReference type="iPTMnet" id="Q9HDB5"/>
<dbReference type="PhosphoSitePlus" id="Q9HDB5"/>
<dbReference type="BioMuta" id="NRXN3"/>
<dbReference type="DMDM" id="218512141"/>
<dbReference type="jPOST" id="Q9HDB5"/>
<dbReference type="MassIVE" id="Q9HDB5"/>
<dbReference type="PeptideAtlas" id="Q9HDB5"/>
<dbReference type="ProteomicsDB" id="81844">
    <molecule id="Q9HDB5-1"/>
</dbReference>
<dbReference type="ProteomicsDB" id="81845">
    <molecule id="Q9HDB5-2"/>
</dbReference>
<dbReference type="ProteomicsDB" id="81846">
    <molecule id="Q9HDB5-3"/>
</dbReference>
<dbReference type="ProteomicsDB" id="81847">
    <molecule id="Q9HDB5-4"/>
</dbReference>
<dbReference type="Antibodypedia" id="106">
    <property type="antibodies" value="235 antibodies from 31 providers"/>
</dbReference>
<dbReference type="DNASU" id="9369"/>
<dbReference type="Ensembl" id="ENST00000281127.11">
    <molecule id="Q9HDB5-2"/>
    <property type="protein sequence ID" value="ENSP00000281127.7"/>
    <property type="gene ID" value="ENSG00000021645.20"/>
</dbReference>
<dbReference type="Ensembl" id="ENST00000428277.6">
    <molecule id="Q9HDB5-4"/>
    <property type="protein sequence ID" value="ENSP00000394426.2"/>
    <property type="gene ID" value="ENSG00000021645.20"/>
</dbReference>
<dbReference type="Ensembl" id="ENST00000557594.5">
    <molecule id="Q9HDB5-1"/>
    <property type="protein sequence ID" value="ENSP00000451672.1"/>
    <property type="gene ID" value="ENSG00000021645.20"/>
</dbReference>
<dbReference type="GeneID" id="9369"/>
<dbReference type="KEGG" id="hsa:9369"/>
<dbReference type="UCSC" id="uc001xuq.4">
    <molecule id="Q9HDB5-1"/>
    <property type="organism name" value="human"/>
</dbReference>
<dbReference type="AGR" id="HGNC:8010"/>
<dbReference type="CTD" id="9369"/>
<dbReference type="DisGeNET" id="9369"/>
<dbReference type="GeneCards" id="NRXN3"/>
<dbReference type="HGNC" id="HGNC:8010">
    <property type="gene designation" value="NRXN3"/>
</dbReference>
<dbReference type="HPA" id="ENSG00000021645">
    <property type="expression patterns" value="Tissue enhanced (brain, retina)"/>
</dbReference>
<dbReference type="MalaCards" id="NRXN3"/>
<dbReference type="MIM" id="600567">
    <property type="type" value="gene"/>
</dbReference>
<dbReference type="neXtProt" id="NX_Q9HDB5"/>
<dbReference type="OpenTargets" id="ENSG00000021645"/>
<dbReference type="PharmGKB" id="PA31788"/>
<dbReference type="VEuPathDB" id="HostDB:ENSG00000021645"/>
<dbReference type="GeneTree" id="ENSGT00940000154618"/>
<dbReference type="HOGENOM" id="CLU_025785_2_0_1"/>
<dbReference type="OrthoDB" id="5989513at2759"/>
<dbReference type="PathwayCommons" id="Q9HDB5"/>
<dbReference type="Reactome" id="R-HSA-6794361">
    <property type="pathway name" value="Neurexins and neuroligins"/>
</dbReference>
<dbReference type="SignaLink" id="Q9HDB5"/>
<dbReference type="SIGNOR" id="Q9HDB5"/>
<dbReference type="BioGRID-ORCS" id="9369">
    <property type="hits" value="13 hits in 1146 CRISPR screens"/>
</dbReference>
<dbReference type="ChiTaRS" id="NRXN3">
    <property type="organism name" value="human"/>
</dbReference>
<dbReference type="GeneWiki" id="NRXN3"/>
<dbReference type="GenomeRNAi" id="9369"/>
<dbReference type="Pharos" id="Q9HDB5">
    <property type="development level" value="Tbio"/>
</dbReference>
<dbReference type="Proteomes" id="UP000005640">
    <property type="component" value="Chromosome 14"/>
</dbReference>
<dbReference type="Bgee" id="ENSG00000021645">
    <property type="expression patterns" value="Expressed in cerebellar vermis and 164 other cell types or tissues"/>
</dbReference>
<dbReference type="ExpressionAtlas" id="Q9HDB5">
    <property type="expression patterns" value="baseline and differential"/>
</dbReference>
<dbReference type="GO" id="GO:0042995">
    <property type="term" value="C:cell projection"/>
    <property type="evidence" value="ECO:0007669"/>
    <property type="project" value="UniProtKB-KW"/>
</dbReference>
<dbReference type="GO" id="GO:0005886">
    <property type="term" value="C:plasma membrane"/>
    <property type="evidence" value="ECO:0000304"/>
    <property type="project" value="Reactome"/>
</dbReference>
<dbReference type="GO" id="GO:0042734">
    <property type="term" value="C:presynaptic membrane"/>
    <property type="evidence" value="ECO:0000250"/>
    <property type="project" value="UniProt"/>
</dbReference>
<dbReference type="GO" id="GO:0098820">
    <property type="term" value="C:trans-synaptic protein complex"/>
    <property type="evidence" value="ECO:0000250"/>
    <property type="project" value="UniProt"/>
</dbReference>
<dbReference type="GO" id="GO:0050839">
    <property type="term" value="F:cell adhesion molecule binding"/>
    <property type="evidence" value="ECO:0000304"/>
    <property type="project" value="BHF-UCL"/>
</dbReference>
<dbReference type="GO" id="GO:0046872">
    <property type="term" value="F:metal ion binding"/>
    <property type="evidence" value="ECO:0007669"/>
    <property type="project" value="UniProtKB-KW"/>
</dbReference>
<dbReference type="GO" id="GO:0097109">
    <property type="term" value="F:neuroligin family protein binding"/>
    <property type="evidence" value="ECO:0000304"/>
    <property type="project" value="BHF-UCL"/>
</dbReference>
<dbReference type="GO" id="GO:0004888">
    <property type="term" value="F:transmembrane signaling receptor activity"/>
    <property type="evidence" value="ECO:0000303"/>
    <property type="project" value="BHF-UCL"/>
</dbReference>
<dbReference type="GO" id="GO:0030534">
    <property type="term" value="P:adult behavior"/>
    <property type="evidence" value="ECO:0000316"/>
    <property type="project" value="BHF-UCL"/>
</dbReference>
<dbReference type="GO" id="GO:0001525">
    <property type="term" value="P:angiogenesis"/>
    <property type="evidence" value="ECO:0000250"/>
    <property type="project" value="UniProtKB"/>
</dbReference>
<dbReference type="GO" id="GO:0007612">
    <property type="term" value="P:learning"/>
    <property type="evidence" value="ECO:0000316"/>
    <property type="project" value="BHF-UCL"/>
</dbReference>
<dbReference type="GO" id="GO:0007158">
    <property type="term" value="P:neuron cell-cell adhesion"/>
    <property type="evidence" value="ECO:0000304"/>
    <property type="project" value="BHF-UCL"/>
</dbReference>
<dbReference type="GO" id="GO:0007165">
    <property type="term" value="P:signal transduction"/>
    <property type="evidence" value="ECO:0000303"/>
    <property type="project" value="BHF-UCL"/>
</dbReference>
<dbReference type="GO" id="GO:0035176">
    <property type="term" value="P:social behavior"/>
    <property type="evidence" value="ECO:0000316"/>
    <property type="project" value="BHF-UCL"/>
</dbReference>
<dbReference type="GO" id="GO:0071625">
    <property type="term" value="P:vocalization behavior"/>
    <property type="evidence" value="ECO:0000316"/>
    <property type="project" value="BHF-UCL"/>
</dbReference>
<dbReference type="CDD" id="cd00110">
    <property type="entry name" value="LamG"/>
    <property type="match status" value="1"/>
</dbReference>
<dbReference type="FunFam" id="2.60.120.200:FF:000003">
    <property type="entry name" value="neurexin-1 isoform X1"/>
    <property type="match status" value="1"/>
</dbReference>
<dbReference type="Gene3D" id="2.60.120.200">
    <property type="match status" value="1"/>
</dbReference>
<dbReference type="InterPro" id="IPR013320">
    <property type="entry name" value="ConA-like_dom_sf"/>
</dbReference>
<dbReference type="InterPro" id="IPR001791">
    <property type="entry name" value="Laminin_G"/>
</dbReference>
<dbReference type="InterPro" id="IPR003585">
    <property type="entry name" value="Neurexin-like"/>
</dbReference>
<dbReference type="InterPro" id="IPR050372">
    <property type="entry name" value="Neurexin-related_CASP"/>
</dbReference>
<dbReference type="InterPro" id="IPR027789">
    <property type="entry name" value="Syndecan/Neurexin_dom"/>
</dbReference>
<dbReference type="PANTHER" id="PTHR15036:SF57">
    <property type="entry name" value="NEUREXIN-3"/>
    <property type="match status" value="1"/>
</dbReference>
<dbReference type="PANTHER" id="PTHR15036">
    <property type="entry name" value="PIKACHURIN-LIKE PROTEIN"/>
    <property type="match status" value="1"/>
</dbReference>
<dbReference type="Pfam" id="PF02210">
    <property type="entry name" value="Laminin_G_2"/>
    <property type="match status" value="1"/>
</dbReference>
<dbReference type="Pfam" id="PF01034">
    <property type="entry name" value="Syndecan"/>
    <property type="match status" value="1"/>
</dbReference>
<dbReference type="SMART" id="SM00294">
    <property type="entry name" value="4.1m"/>
    <property type="match status" value="1"/>
</dbReference>
<dbReference type="SMART" id="SM00282">
    <property type="entry name" value="LamG"/>
    <property type="match status" value="1"/>
</dbReference>
<dbReference type="SUPFAM" id="SSF49899">
    <property type="entry name" value="Concanavalin A-like lectins/glucanases"/>
    <property type="match status" value="1"/>
</dbReference>
<dbReference type="PROSITE" id="PS50025">
    <property type="entry name" value="LAM_G_DOMAIN"/>
    <property type="match status" value="1"/>
</dbReference>
<feature type="signal peptide" evidence="5">
    <location>
        <begin position="1"/>
        <end position="35"/>
    </location>
</feature>
<feature type="chain" id="PRO_0000019502" description="Neurexin-3-beta">
    <location>
        <begin position="36"/>
        <end position="637"/>
    </location>
</feature>
<feature type="chain" id="PRO_0000412543" description="Neurexin-3-beta, soluble form" evidence="14">
    <location>
        <begin position="36"/>
        <end position="550"/>
    </location>
</feature>
<feature type="chain" id="PRO_0000412544" description="Neurexin-3-beta, C-terminal fragment" evidence="14">
    <location>
        <begin position="551"/>
        <end position="637"/>
    </location>
</feature>
<feature type="topological domain" description="Extracellular" evidence="5">
    <location>
        <begin position="36"/>
        <end position="562"/>
    </location>
</feature>
<feature type="transmembrane region" description="Helical" evidence="5">
    <location>
        <begin position="563"/>
        <end position="583"/>
    </location>
</feature>
<feature type="topological domain" description="Cytoplasmic" evidence="5">
    <location>
        <begin position="584"/>
        <end position="637"/>
    </location>
</feature>
<feature type="domain" description="Laminin G-like" evidence="6">
    <location>
        <begin position="85"/>
        <end position="255"/>
    </location>
</feature>
<feature type="region of interest" description="Disordered" evidence="7">
    <location>
        <begin position="43"/>
        <end position="65"/>
    </location>
</feature>
<feature type="region of interest" description="Disordered" evidence="7">
    <location>
        <begin position="289"/>
        <end position="310"/>
    </location>
</feature>
<feature type="region of interest" description="Disordered" evidence="7">
    <location>
        <begin position="605"/>
        <end position="637"/>
    </location>
</feature>
<feature type="compositionally biased region" description="Low complexity" evidence="7">
    <location>
        <begin position="43"/>
        <end position="52"/>
    </location>
</feature>
<feature type="compositionally biased region" description="Basic residues" evidence="7">
    <location>
        <begin position="55"/>
        <end position="65"/>
    </location>
</feature>
<feature type="compositionally biased region" description="Polar residues" evidence="7">
    <location>
        <begin position="298"/>
        <end position="310"/>
    </location>
</feature>
<feature type="binding site" evidence="1">
    <location>
        <position position="137"/>
    </location>
    <ligand>
        <name>Ca(2+)</name>
        <dbReference type="ChEBI" id="CHEBI:29108"/>
    </ligand>
</feature>
<feature type="binding site" evidence="1">
    <location>
        <position position="154"/>
    </location>
    <ligand>
        <name>Ca(2+)</name>
        <dbReference type="ChEBI" id="CHEBI:29108"/>
    </ligand>
</feature>
<feature type="binding site" evidence="1">
    <location>
        <position position="206"/>
    </location>
    <ligand>
        <name>Ca(2+)</name>
        <dbReference type="ChEBI" id="CHEBI:29108"/>
    </ligand>
</feature>
<feature type="binding site" evidence="1">
    <location>
        <position position="208"/>
    </location>
    <ligand>
        <name>Ca(2+)</name>
        <dbReference type="ChEBI" id="CHEBI:29108"/>
    </ligand>
</feature>
<feature type="glycosylation site" description="N-linked (GlcNAc...) asparagine" evidence="5">
    <location>
        <position position="184"/>
    </location>
</feature>
<feature type="glycosylation site" description="N-linked (GlcNAc...) asparagine" evidence="5">
    <location>
        <position position="252"/>
    </location>
</feature>
<feature type="glycosylation site" description="N-linked (GlcNAc...) asparagine" evidence="5">
    <location>
        <position position="296"/>
    </location>
</feature>
<feature type="glycosylation site" description="O-linked (Xyl...) (heparan sulfate) serine" evidence="3">
    <location>
        <position position="312"/>
    </location>
</feature>
<feature type="splice variant" id="VSP_035644" description="In isoform 3b and isoform 4b." evidence="10">
    <original>T</original>
    <variation>TGNTDNERFQMVKQKIPFKYNRPVEEWLQEK</variation>
    <location>
        <position position="200"/>
    </location>
</feature>
<feature type="splice variant" id="VSP_036465" description="In isoform 2b." evidence="11 12">
    <original>S</original>
    <variation>ST</variation>
    <location>
        <position position="328"/>
    </location>
</feature>
<feature type="splice variant" id="VSP_036466" description="In isoform 2b." evidence="11 12">
    <original>TGGELVIPLLVEDPLATPPIATRAPSITLPPTFRPLLTIIETTKDSLSMTSEAGLPCLSDQGSDGCDDDGLVISGYGSGETFDSNLPPTDDEDFYTTFSLVTDKSLSTSIFEGGYKAHAPKWESKDFRPNKVSETSRTTTTSLSPELIRFTASSSSGMVPKLPAGKMNNRDLKPQPDIVLLPLPTAYELDSTKLKSPLITSPMFRNVPT</original>
    <variation>GRS</variation>
    <location>
        <begin position="329"/>
        <end position="537"/>
    </location>
</feature>
<feature type="splice variant" id="VSP_040988" description="In isoform 4b." evidence="13">
    <location>
        <begin position="329"/>
        <end position="536"/>
    </location>
</feature>
<feature type="splice variant" id="VSP_035646" description="In isoform 3b." evidence="10">
    <original>TGGELVIPLLVEDPLATPPIATRAPSITLPPTFRPLLTI</original>
    <variation>GRSARSSNAARSLRAALTWTWRLTYTFTPIIFISCVVH</variation>
    <location>
        <begin position="329"/>
        <end position="367"/>
    </location>
</feature>
<feature type="splice variant" id="VSP_035647" description="In isoform 3b." evidence="10">
    <location>
        <begin position="368"/>
        <end position="637"/>
    </location>
</feature>